<protein>
    <recommendedName>
        <fullName evidence="1">Small ribosomal subunit protein uS11</fullName>
    </recommendedName>
    <alternativeName>
        <fullName evidence="2">30S ribosomal protein S11</fullName>
    </alternativeName>
</protein>
<sequence length="134" mass="14439">MADGDDRGGKRTPQKKNVVVESNGRAYVKATFNNVIVTLTDQYGNTISWASAGKMGFKGSRKNTPYAAQKAGESAANEAYELGLRRVDVYVKGPGSGREGAIRAMSESGLEVASIRDVTPLPHNGCRPPKRRRV</sequence>
<accession>Q2S3P1</accession>
<organism>
    <name type="scientific">Salinibacter ruber (strain DSM 13855 / M31)</name>
    <dbReference type="NCBI Taxonomy" id="309807"/>
    <lineage>
        <taxon>Bacteria</taxon>
        <taxon>Pseudomonadati</taxon>
        <taxon>Rhodothermota</taxon>
        <taxon>Rhodothermia</taxon>
        <taxon>Rhodothermales</taxon>
        <taxon>Salinibacteraceae</taxon>
        <taxon>Salinibacter</taxon>
    </lineage>
</organism>
<dbReference type="EMBL" id="CP000159">
    <property type="protein sequence ID" value="ABC45438.1"/>
    <property type="status" value="ALT_INIT"/>
    <property type="molecule type" value="Genomic_DNA"/>
</dbReference>
<dbReference type="RefSeq" id="WP_164923548.1">
    <property type="nucleotide sequence ID" value="NC_007677.1"/>
</dbReference>
<dbReference type="RefSeq" id="YP_445190.1">
    <property type="nucleotide sequence ID" value="NC_007677.1"/>
</dbReference>
<dbReference type="SMR" id="Q2S3P1"/>
<dbReference type="STRING" id="309807.SRU_1058"/>
<dbReference type="EnsemblBacteria" id="ABC45438">
    <property type="protein sequence ID" value="ABC45438"/>
    <property type="gene ID" value="SRU_1058"/>
</dbReference>
<dbReference type="KEGG" id="sru:SRU_1058"/>
<dbReference type="PATRIC" id="fig|309807.25.peg.1096"/>
<dbReference type="eggNOG" id="COG0100">
    <property type="taxonomic scope" value="Bacteria"/>
</dbReference>
<dbReference type="HOGENOM" id="CLU_072439_2_0_10"/>
<dbReference type="OrthoDB" id="9806415at2"/>
<dbReference type="Proteomes" id="UP000008674">
    <property type="component" value="Chromosome"/>
</dbReference>
<dbReference type="GO" id="GO:1990904">
    <property type="term" value="C:ribonucleoprotein complex"/>
    <property type="evidence" value="ECO:0007669"/>
    <property type="project" value="UniProtKB-KW"/>
</dbReference>
<dbReference type="GO" id="GO:0005840">
    <property type="term" value="C:ribosome"/>
    <property type="evidence" value="ECO:0007669"/>
    <property type="project" value="UniProtKB-KW"/>
</dbReference>
<dbReference type="GO" id="GO:0019843">
    <property type="term" value="F:rRNA binding"/>
    <property type="evidence" value="ECO:0007669"/>
    <property type="project" value="UniProtKB-UniRule"/>
</dbReference>
<dbReference type="GO" id="GO:0003735">
    <property type="term" value="F:structural constituent of ribosome"/>
    <property type="evidence" value="ECO:0007669"/>
    <property type="project" value="InterPro"/>
</dbReference>
<dbReference type="GO" id="GO:0006412">
    <property type="term" value="P:translation"/>
    <property type="evidence" value="ECO:0007669"/>
    <property type="project" value="UniProtKB-UniRule"/>
</dbReference>
<dbReference type="FunFam" id="3.30.420.80:FF:000004">
    <property type="entry name" value="30S ribosomal protein S11"/>
    <property type="match status" value="1"/>
</dbReference>
<dbReference type="Gene3D" id="3.30.420.80">
    <property type="entry name" value="Ribosomal protein S11"/>
    <property type="match status" value="1"/>
</dbReference>
<dbReference type="HAMAP" id="MF_01310">
    <property type="entry name" value="Ribosomal_uS11"/>
    <property type="match status" value="1"/>
</dbReference>
<dbReference type="InterPro" id="IPR001971">
    <property type="entry name" value="Ribosomal_uS11"/>
</dbReference>
<dbReference type="InterPro" id="IPR019981">
    <property type="entry name" value="Ribosomal_uS11_bac-type"/>
</dbReference>
<dbReference type="InterPro" id="IPR018102">
    <property type="entry name" value="Ribosomal_uS11_CS"/>
</dbReference>
<dbReference type="InterPro" id="IPR036967">
    <property type="entry name" value="Ribosomal_uS11_sf"/>
</dbReference>
<dbReference type="NCBIfam" id="NF003698">
    <property type="entry name" value="PRK05309.1"/>
    <property type="match status" value="1"/>
</dbReference>
<dbReference type="NCBIfam" id="TIGR03632">
    <property type="entry name" value="uS11_bact"/>
    <property type="match status" value="1"/>
</dbReference>
<dbReference type="PANTHER" id="PTHR11759">
    <property type="entry name" value="40S RIBOSOMAL PROTEIN S14/30S RIBOSOMAL PROTEIN S11"/>
    <property type="match status" value="1"/>
</dbReference>
<dbReference type="Pfam" id="PF00411">
    <property type="entry name" value="Ribosomal_S11"/>
    <property type="match status" value="1"/>
</dbReference>
<dbReference type="PIRSF" id="PIRSF002131">
    <property type="entry name" value="Ribosomal_S11"/>
    <property type="match status" value="1"/>
</dbReference>
<dbReference type="SUPFAM" id="SSF53137">
    <property type="entry name" value="Translational machinery components"/>
    <property type="match status" value="1"/>
</dbReference>
<dbReference type="PROSITE" id="PS00054">
    <property type="entry name" value="RIBOSOMAL_S11"/>
    <property type="match status" value="1"/>
</dbReference>
<reference key="1">
    <citation type="journal article" date="2005" name="Proc. Natl. Acad. Sci. U.S.A.">
        <title>The genome of Salinibacter ruber: convergence and gene exchange among hyperhalophilic bacteria and archaea.</title>
        <authorList>
            <person name="Mongodin E.F."/>
            <person name="Nelson K.E."/>
            <person name="Daugherty S."/>
            <person name="DeBoy R.T."/>
            <person name="Wister J."/>
            <person name="Khouri H."/>
            <person name="Weidman J."/>
            <person name="Walsh D.A."/>
            <person name="Papke R.T."/>
            <person name="Sanchez Perez G."/>
            <person name="Sharma A.K."/>
            <person name="Nesbo C.L."/>
            <person name="MacLeod D."/>
            <person name="Bapteste E."/>
            <person name="Doolittle W.F."/>
            <person name="Charlebois R.L."/>
            <person name="Legault B."/>
            <person name="Rodriguez-Valera F."/>
        </authorList>
    </citation>
    <scope>NUCLEOTIDE SEQUENCE [LARGE SCALE GENOMIC DNA]</scope>
    <source>
        <strain>DSM 13855 / CECT 5946 / M31</strain>
    </source>
</reference>
<evidence type="ECO:0000255" key="1">
    <source>
        <dbReference type="HAMAP-Rule" id="MF_01310"/>
    </source>
</evidence>
<evidence type="ECO:0000305" key="2"/>
<proteinExistence type="inferred from homology"/>
<comment type="function">
    <text evidence="1">Located on the platform of the 30S subunit, it bridges several disparate RNA helices of the 16S rRNA. Forms part of the Shine-Dalgarno cleft in the 70S ribosome.</text>
</comment>
<comment type="subunit">
    <text evidence="1">Part of the 30S ribosomal subunit. Interacts with proteins S7 and S18. Binds to IF-3.</text>
</comment>
<comment type="similarity">
    <text evidence="1">Belongs to the universal ribosomal protein uS11 family.</text>
</comment>
<comment type="sequence caution" evidence="2">
    <conflict type="erroneous initiation">
        <sequence resource="EMBL-CDS" id="ABC45438"/>
    </conflict>
</comment>
<name>RS11_SALRD</name>
<keyword id="KW-1185">Reference proteome</keyword>
<keyword id="KW-0687">Ribonucleoprotein</keyword>
<keyword id="KW-0689">Ribosomal protein</keyword>
<keyword id="KW-0694">RNA-binding</keyword>
<keyword id="KW-0699">rRNA-binding</keyword>
<feature type="chain" id="PRO_0000294847" description="Small ribosomal subunit protein uS11">
    <location>
        <begin position="1"/>
        <end position="134"/>
    </location>
</feature>
<gene>
    <name evidence="1" type="primary">rpsK</name>
    <name type="ordered locus">SRU_1058</name>
</gene>